<protein>
    <recommendedName>
        <fullName evidence="1">Elongation factor P</fullName>
        <shortName evidence="1">EF-P</shortName>
    </recommendedName>
</protein>
<accession>B0REX1</accession>
<gene>
    <name evidence="1" type="primary">efp</name>
    <name type="ordered locus">CMS2041</name>
</gene>
<sequence>MASTADIKNGVVLNMDGQLWTVIEFQHVKPGKGGAFVRTKVKNVMSGKVVDRTFNAGAKIETETVDRRDFQYLYADGENFVFMDTSDYDQITLSAAQVGDAKNFMLENQDVTVALHNGEGLYVELPASVVLTITYTEPGLQGDRSTGGTKPATVETGHQIQVPLFLEQGTRVKVDTRTGDYLGRVTD</sequence>
<feature type="chain" id="PRO_1000076508" description="Elongation factor P">
    <location>
        <begin position="1"/>
        <end position="187"/>
    </location>
</feature>
<evidence type="ECO:0000255" key="1">
    <source>
        <dbReference type="HAMAP-Rule" id="MF_00141"/>
    </source>
</evidence>
<keyword id="KW-0963">Cytoplasm</keyword>
<keyword id="KW-0251">Elongation factor</keyword>
<keyword id="KW-0648">Protein biosynthesis</keyword>
<name>EFP_CLASE</name>
<reference key="1">
    <citation type="journal article" date="2008" name="J. Bacteriol.">
        <title>Genome of the actinomycete plant pathogen Clavibacter michiganensis subsp. sepedonicus suggests recent niche adaptation.</title>
        <authorList>
            <person name="Bentley S.D."/>
            <person name="Corton C."/>
            <person name="Brown S.E."/>
            <person name="Barron A."/>
            <person name="Clark L."/>
            <person name="Doggett J."/>
            <person name="Harris B."/>
            <person name="Ormond D."/>
            <person name="Quail M.A."/>
            <person name="May G."/>
            <person name="Francis D."/>
            <person name="Knudson D."/>
            <person name="Parkhill J."/>
            <person name="Ishimaru C.A."/>
        </authorList>
    </citation>
    <scope>NUCLEOTIDE SEQUENCE [LARGE SCALE GENOMIC DNA]</scope>
    <source>
        <strain>ATCC 33113 / DSM 20744 / JCM 9667 / LMG 2889 / ICMP 2535 / C-1</strain>
    </source>
</reference>
<dbReference type="EMBL" id="AM849034">
    <property type="protein sequence ID" value="CAQ02137.1"/>
    <property type="molecule type" value="Genomic_DNA"/>
</dbReference>
<dbReference type="RefSeq" id="WP_012038481.1">
    <property type="nucleotide sequence ID" value="NZ_MZMN01000003.1"/>
</dbReference>
<dbReference type="SMR" id="B0REX1"/>
<dbReference type="STRING" id="31964.CMS2041"/>
<dbReference type="GeneID" id="92983555"/>
<dbReference type="KEGG" id="cms:CMS2041"/>
<dbReference type="eggNOG" id="COG0231">
    <property type="taxonomic scope" value="Bacteria"/>
</dbReference>
<dbReference type="HOGENOM" id="CLU_074944_0_1_11"/>
<dbReference type="OrthoDB" id="9801844at2"/>
<dbReference type="UniPathway" id="UPA00345"/>
<dbReference type="Proteomes" id="UP000001318">
    <property type="component" value="Chromosome"/>
</dbReference>
<dbReference type="GO" id="GO:0005737">
    <property type="term" value="C:cytoplasm"/>
    <property type="evidence" value="ECO:0007669"/>
    <property type="project" value="UniProtKB-SubCell"/>
</dbReference>
<dbReference type="GO" id="GO:0003746">
    <property type="term" value="F:translation elongation factor activity"/>
    <property type="evidence" value="ECO:0007669"/>
    <property type="project" value="UniProtKB-UniRule"/>
</dbReference>
<dbReference type="GO" id="GO:0043043">
    <property type="term" value="P:peptide biosynthetic process"/>
    <property type="evidence" value="ECO:0007669"/>
    <property type="project" value="InterPro"/>
</dbReference>
<dbReference type="CDD" id="cd04470">
    <property type="entry name" value="S1_EF-P_repeat_1"/>
    <property type="match status" value="1"/>
</dbReference>
<dbReference type="CDD" id="cd05794">
    <property type="entry name" value="S1_EF-P_repeat_2"/>
    <property type="match status" value="1"/>
</dbReference>
<dbReference type="FunFam" id="2.30.30.30:FF:000003">
    <property type="entry name" value="Elongation factor P"/>
    <property type="match status" value="1"/>
</dbReference>
<dbReference type="FunFam" id="2.40.50.140:FF:000004">
    <property type="entry name" value="Elongation factor P"/>
    <property type="match status" value="1"/>
</dbReference>
<dbReference type="FunFam" id="2.40.50.140:FF:000009">
    <property type="entry name" value="Elongation factor P"/>
    <property type="match status" value="1"/>
</dbReference>
<dbReference type="Gene3D" id="2.30.30.30">
    <property type="match status" value="1"/>
</dbReference>
<dbReference type="Gene3D" id="2.40.50.140">
    <property type="entry name" value="Nucleic acid-binding proteins"/>
    <property type="match status" value="2"/>
</dbReference>
<dbReference type="HAMAP" id="MF_00141">
    <property type="entry name" value="EF_P"/>
    <property type="match status" value="1"/>
</dbReference>
<dbReference type="InterPro" id="IPR015365">
    <property type="entry name" value="Elong-fact-P_C"/>
</dbReference>
<dbReference type="InterPro" id="IPR012340">
    <property type="entry name" value="NA-bd_OB-fold"/>
</dbReference>
<dbReference type="InterPro" id="IPR014722">
    <property type="entry name" value="Rib_uL2_dom2"/>
</dbReference>
<dbReference type="InterPro" id="IPR020599">
    <property type="entry name" value="Transl_elong_fac_P/YeiP"/>
</dbReference>
<dbReference type="InterPro" id="IPR013185">
    <property type="entry name" value="Transl_elong_KOW-like"/>
</dbReference>
<dbReference type="InterPro" id="IPR001059">
    <property type="entry name" value="Transl_elong_P/YeiP_cen"/>
</dbReference>
<dbReference type="InterPro" id="IPR013852">
    <property type="entry name" value="Transl_elong_P/YeiP_CS"/>
</dbReference>
<dbReference type="InterPro" id="IPR011768">
    <property type="entry name" value="Transl_elongation_fac_P"/>
</dbReference>
<dbReference type="InterPro" id="IPR008991">
    <property type="entry name" value="Translation_prot_SH3-like_sf"/>
</dbReference>
<dbReference type="NCBIfam" id="TIGR00038">
    <property type="entry name" value="efp"/>
    <property type="match status" value="1"/>
</dbReference>
<dbReference type="NCBIfam" id="NF001810">
    <property type="entry name" value="PRK00529.1"/>
    <property type="match status" value="1"/>
</dbReference>
<dbReference type="PANTHER" id="PTHR30053">
    <property type="entry name" value="ELONGATION FACTOR P"/>
    <property type="match status" value="1"/>
</dbReference>
<dbReference type="PANTHER" id="PTHR30053:SF12">
    <property type="entry name" value="ELONGATION FACTOR P (EF-P) FAMILY PROTEIN"/>
    <property type="match status" value="1"/>
</dbReference>
<dbReference type="Pfam" id="PF01132">
    <property type="entry name" value="EFP"/>
    <property type="match status" value="1"/>
</dbReference>
<dbReference type="Pfam" id="PF08207">
    <property type="entry name" value="EFP_N"/>
    <property type="match status" value="1"/>
</dbReference>
<dbReference type="Pfam" id="PF09285">
    <property type="entry name" value="Elong-fact-P_C"/>
    <property type="match status" value="1"/>
</dbReference>
<dbReference type="PIRSF" id="PIRSF005901">
    <property type="entry name" value="EF-P"/>
    <property type="match status" value="1"/>
</dbReference>
<dbReference type="SMART" id="SM01185">
    <property type="entry name" value="EFP"/>
    <property type="match status" value="1"/>
</dbReference>
<dbReference type="SMART" id="SM00841">
    <property type="entry name" value="Elong-fact-P_C"/>
    <property type="match status" value="1"/>
</dbReference>
<dbReference type="SUPFAM" id="SSF50249">
    <property type="entry name" value="Nucleic acid-binding proteins"/>
    <property type="match status" value="2"/>
</dbReference>
<dbReference type="SUPFAM" id="SSF50104">
    <property type="entry name" value="Translation proteins SH3-like domain"/>
    <property type="match status" value="1"/>
</dbReference>
<dbReference type="PROSITE" id="PS01275">
    <property type="entry name" value="EFP"/>
    <property type="match status" value="1"/>
</dbReference>
<proteinExistence type="inferred from homology"/>
<organism>
    <name type="scientific">Clavibacter sepedonicus</name>
    <name type="common">Clavibacter michiganensis subsp. sepedonicus</name>
    <dbReference type="NCBI Taxonomy" id="31964"/>
    <lineage>
        <taxon>Bacteria</taxon>
        <taxon>Bacillati</taxon>
        <taxon>Actinomycetota</taxon>
        <taxon>Actinomycetes</taxon>
        <taxon>Micrococcales</taxon>
        <taxon>Microbacteriaceae</taxon>
        <taxon>Clavibacter</taxon>
    </lineage>
</organism>
<comment type="function">
    <text evidence="1">Involved in peptide bond synthesis. Stimulates efficient translation and peptide-bond synthesis on native or reconstituted 70S ribosomes in vitro. Probably functions indirectly by altering the affinity of the ribosome for aminoacyl-tRNA, thus increasing their reactivity as acceptors for peptidyl transferase.</text>
</comment>
<comment type="pathway">
    <text evidence="1">Protein biosynthesis; polypeptide chain elongation.</text>
</comment>
<comment type="subcellular location">
    <subcellularLocation>
        <location evidence="1">Cytoplasm</location>
    </subcellularLocation>
</comment>
<comment type="similarity">
    <text evidence="1">Belongs to the elongation factor P family.</text>
</comment>